<organism>
    <name type="scientific">Escherichia coli O45:K1 (strain S88 / ExPEC)</name>
    <dbReference type="NCBI Taxonomy" id="585035"/>
    <lineage>
        <taxon>Bacteria</taxon>
        <taxon>Pseudomonadati</taxon>
        <taxon>Pseudomonadota</taxon>
        <taxon>Gammaproteobacteria</taxon>
        <taxon>Enterobacterales</taxon>
        <taxon>Enterobacteriaceae</taxon>
        <taxon>Escherichia</taxon>
    </lineage>
</organism>
<dbReference type="EMBL" id="CU928161">
    <property type="protein sequence ID" value="CAR01579.1"/>
    <property type="molecule type" value="Genomic_DNA"/>
</dbReference>
<dbReference type="RefSeq" id="WP_001230983.1">
    <property type="nucleotide sequence ID" value="NC_011742.1"/>
</dbReference>
<dbReference type="SMR" id="B7MBI5"/>
<dbReference type="KEGG" id="ecz:ECS88_0224"/>
<dbReference type="HOGENOM" id="CLU_083563_0_0_6"/>
<dbReference type="Proteomes" id="UP000000747">
    <property type="component" value="Chromosome"/>
</dbReference>
<dbReference type="GO" id="GO:0005737">
    <property type="term" value="C:cytoplasm"/>
    <property type="evidence" value="ECO:0007669"/>
    <property type="project" value="UniProtKB-SubCell"/>
</dbReference>
<dbReference type="GO" id="GO:0003824">
    <property type="term" value="F:catalytic activity"/>
    <property type="evidence" value="ECO:0007669"/>
    <property type="project" value="InterPro"/>
</dbReference>
<dbReference type="Gene3D" id="3.60.10.10">
    <property type="entry name" value="Endonuclease/exonuclease/phosphatase"/>
    <property type="match status" value="1"/>
</dbReference>
<dbReference type="HAMAP" id="MF_01119">
    <property type="entry name" value="UPF0294"/>
    <property type="match status" value="1"/>
</dbReference>
<dbReference type="InterPro" id="IPR036691">
    <property type="entry name" value="Endo/exonu/phosph_ase_sf"/>
</dbReference>
<dbReference type="InterPro" id="IPR005135">
    <property type="entry name" value="Endo/exonuclease/phosphatase"/>
</dbReference>
<dbReference type="InterPro" id="IPR022958">
    <property type="entry name" value="UPF0294"/>
</dbReference>
<dbReference type="NCBIfam" id="NF003839">
    <property type="entry name" value="PRK05421.1-1"/>
    <property type="match status" value="1"/>
</dbReference>
<dbReference type="NCBIfam" id="NF003840">
    <property type="entry name" value="PRK05421.1-2"/>
    <property type="match status" value="1"/>
</dbReference>
<dbReference type="NCBIfam" id="NF003841">
    <property type="entry name" value="PRK05421.1-3"/>
    <property type="match status" value="1"/>
</dbReference>
<dbReference type="NCBIfam" id="NF003842">
    <property type="entry name" value="PRK05421.1-4"/>
    <property type="match status" value="1"/>
</dbReference>
<dbReference type="Pfam" id="PF03372">
    <property type="entry name" value="Exo_endo_phos"/>
    <property type="match status" value="1"/>
</dbReference>
<dbReference type="SUPFAM" id="SSF56219">
    <property type="entry name" value="DNase I-like"/>
    <property type="match status" value="1"/>
</dbReference>
<proteinExistence type="inferred from homology"/>
<accession>B7MBI5</accession>
<protein>
    <recommendedName>
        <fullName evidence="1">UPF0294 protein YafD</fullName>
    </recommendedName>
</protein>
<gene>
    <name evidence="1" type="primary">yafD</name>
    <name type="ordered locus">ECS88_0224</name>
</gene>
<evidence type="ECO:0000255" key="1">
    <source>
        <dbReference type="HAMAP-Rule" id="MF_01119"/>
    </source>
</evidence>
<comment type="subcellular location">
    <subcellularLocation>
        <location evidence="1">Cytoplasm</location>
    </subcellularLocation>
</comment>
<comment type="similarity">
    <text evidence="1">Belongs to the UPF0294 family.</text>
</comment>
<keyword id="KW-0963">Cytoplasm</keyword>
<keyword id="KW-1185">Reference proteome</keyword>
<name>YAFD_ECO45</name>
<sequence>MRKNTYAMRYVAGQPAERILPPGSFASIGQALPPGEPLSTEERIRILVWNIYKQQRAEWLSVLKNYGKDAHLVLLQEAQTTPELVQFATANYLAADQVPAFVLPQHPSGVMTLSAAHPVYCCPLREREPILRLAKSALVTVYPLPDTRLLMVVNIHAVNFSLGVDVYSKQLLPIGDQIAHHSGPVIMAGDFNAWSRRRMNALYRFAREMSLRQVRFTDDQRRRAFGRPLDFVFYRGLNVSEASVLVTRASDHNPLLVEFSPGKPDK</sequence>
<feature type="chain" id="PRO_1000137237" description="UPF0294 protein YafD">
    <location>
        <begin position="1"/>
        <end position="266"/>
    </location>
</feature>
<reference key="1">
    <citation type="journal article" date="2009" name="PLoS Genet.">
        <title>Organised genome dynamics in the Escherichia coli species results in highly diverse adaptive paths.</title>
        <authorList>
            <person name="Touchon M."/>
            <person name="Hoede C."/>
            <person name="Tenaillon O."/>
            <person name="Barbe V."/>
            <person name="Baeriswyl S."/>
            <person name="Bidet P."/>
            <person name="Bingen E."/>
            <person name="Bonacorsi S."/>
            <person name="Bouchier C."/>
            <person name="Bouvet O."/>
            <person name="Calteau A."/>
            <person name="Chiapello H."/>
            <person name="Clermont O."/>
            <person name="Cruveiller S."/>
            <person name="Danchin A."/>
            <person name="Diard M."/>
            <person name="Dossat C."/>
            <person name="Karoui M.E."/>
            <person name="Frapy E."/>
            <person name="Garry L."/>
            <person name="Ghigo J.M."/>
            <person name="Gilles A.M."/>
            <person name="Johnson J."/>
            <person name="Le Bouguenec C."/>
            <person name="Lescat M."/>
            <person name="Mangenot S."/>
            <person name="Martinez-Jehanne V."/>
            <person name="Matic I."/>
            <person name="Nassif X."/>
            <person name="Oztas S."/>
            <person name="Petit M.A."/>
            <person name="Pichon C."/>
            <person name="Rouy Z."/>
            <person name="Ruf C.S."/>
            <person name="Schneider D."/>
            <person name="Tourret J."/>
            <person name="Vacherie B."/>
            <person name="Vallenet D."/>
            <person name="Medigue C."/>
            <person name="Rocha E.P.C."/>
            <person name="Denamur E."/>
        </authorList>
    </citation>
    <scope>NUCLEOTIDE SEQUENCE [LARGE SCALE GENOMIC DNA]</scope>
    <source>
        <strain>S88 / ExPEC</strain>
    </source>
</reference>